<dbReference type="EMBL" id="CP001158">
    <property type="protein sequence ID" value="ACL30302.1"/>
    <property type="molecule type" value="Genomic_DNA"/>
</dbReference>
<dbReference type="RefSeq" id="WP_009874463.1">
    <property type="nucleotide sequence ID" value="NC_011834.1"/>
</dbReference>
<dbReference type="SMR" id="B8D837"/>
<dbReference type="KEGG" id="bau:BUAPTUC7_506"/>
<dbReference type="HOGENOM" id="CLU_061015_2_1_6"/>
<dbReference type="GO" id="GO:1990904">
    <property type="term" value="C:ribonucleoprotein complex"/>
    <property type="evidence" value="ECO:0007669"/>
    <property type="project" value="UniProtKB-KW"/>
</dbReference>
<dbReference type="GO" id="GO:0005840">
    <property type="term" value="C:ribosome"/>
    <property type="evidence" value="ECO:0007669"/>
    <property type="project" value="UniProtKB-KW"/>
</dbReference>
<dbReference type="GO" id="GO:0019843">
    <property type="term" value="F:rRNA binding"/>
    <property type="evidence" value="ECO:0007669"/>
    <property type="project" value="UniProtKB-UniRule"/>
</dbReference>
<dbReference type="GO" id="GO:0003735">
    <property type="term" value="F:structural constituent of ribosome"/>
    <property type="evidence" value="ECO:0007669"/>
    <property type="project" value="InterPro"/>
</dbReference>
<dbReference type="GO" id="GO:0000049">
    <property type="term" value="F:tRNA binding"/>
    <property type="evidence" value="ECO:0007669"/>
    <property type="project" value="UniProtKB-UniRule"/>
</dbReference>
<dbReference type="GO" id="GO:0006412">
    <property type="term" value="P:translation"/>
    <property type="evidence" value="ECO:0007669"/>
    <property type="project" value="UniProtKB-UniRule"/>
</dbReference>
<dbReference type="FunFam" id="3.30.1440.10:FF:000001">
    <property type="entry name" value="50S ribosomal protein L5"/>
    <property type="match status" value="1"/>
</dbReference>
<dbReference type="Gene3D" id="3.30.1440.10">
    <property type="match status" value="1"/>
</dbReference>
<dbReference type="HAMAP" id="MF_01333_B">
    <property type="entry name" value="Ribosomal_uL5_B"/>
    <property type="match status" value="1"/>
</dbReference>
<dbReference type="InterPro" id="IPR002132">
    <property type="entry name" value="Ribosomal_uL5"/>
</dbReference>
<dbReference type="InterPro" id="IPR020930">
    <property type="entry name" value="Ribosomal_uL5_bac-type"/>
</dbReference>
<dbReference type="InterPro" id="IPR031309">
    <property type="entry name" value="Ribosomal_uL5_C"/>
</dbReference>
<dbReference type="InterPro" id="IPR020929">
    <property type="entry name" value="Ribosomal_uL5_CS"/>
</dbReference>
<dbReference type="InterPro" id="IPR022803">
    <property type="entry name" value="Ribosomal_uL5_dom_sf"/>
</dbReference>
<dbReference type="InterPro" id="IPR031310">
    <property type="entry name" value="Ribosomal_uL5_N"/>
</dbReference>
<dbReference type="NCBIfam" id="NF000585">
    <property type="entry name" value="PRK00010.1"/>
    <property type="match status" value="1"/>
</dbReference>
<dbReference type="PANTHER" id="PTHR11994">
    <property type="entry name" value="60S RIBOSOMAL PROTEIN L11-RELATED"/>
    <property type="match status" value="1"/>
</dbReference>
<dbReference type="Pfam" id="PF00281">
    <property type="entry name" value="Ribosomal_L5"/>
    <property type="match status" value="1"/>
</dbReference>
<dbReference type="Pfam" id="PF00673">
    <property type="entry name" value="Ribosomal_L5_C"/>
    <property type="match status" value="1"/>
</dbReference>
<dbReference type="PIRSF" id="PIRSF002161">
    <property type="entry name" value="Ribosomal_L5"/>
    <property type="match status" value="1"/>
</dbReference>
<dbReference type="SUPFAM" id="SSF55282">
    <property type="entry name" value="RL5-like"/>
    <property type="match status" value="1"/>
</dbReference>
<dbReference type="PROSITE" id="PS00358">
    <property type="entry name" value="RIBOSOMAL_L5"/>
    <property type="match status" value="1"/>
</dbReference>
<reference key="1">
    <citation type="journal article" date="2009" name="Science">
        <title>The dynamics and time scale of ongoing genomic erosion in symbiotic bacteria.</title>
        <authorList>
            <person name="Moran N.A."/>
            <person name="McLaughlin H.J."/>
            <person name="Sorek R."/>
        </authorList>
    </citation>
    <scope>NUCLEOTIDE SEQUENCE [LARGE SCALE GENOMIC DNA]</scope>
    <source>
        <strain>Tuc7</strain>
    </source>
</reference>
<comment type="function">
    <text evidence="1">This is one of the proteins that bind and probably mediate the attachment of the 5S RNA into the large ribosomal subunit, where it forms part of the central protuberance. In the 70S ribosome it contacts protein S13 of the 30S subunit (bridge B1b), connecting the 2 subunits; this bridge is implicated in subunit movement. Contacts the P site tRNA; the 5S rRNA and some of its associated proteins might help stabilize positioning of ribosome-bound tRNAs.</text>
</comment>
<comment type="subunit">
    <text evidence="1">Part of the 50S ribosomal subunit; part of the 5S rRNA/L5/L18/L25 subcomplex. Contacts the 5S rRNA and the P site tRNA. Forms a bridge to the 30S subunit in the 70S ribosome.</text>
</comment>
<comment type="similarity">
    <text evidence="1">Belongs to the universal ribosomal protein uL5 family.</text>
</comment>
<gene>
    <name evidence="1" type="primary">rplE</name>
    <name type="ordered locus">BUAPTUC7_506</name>
</gene>
<keyword id="KW-0687">Ribonucleoprotein</keyword>
<keyword id="KW-0689">Ribosomal protein</keyword>
<keyword id="KW-0694">RNA-binding</keyword>
<keyword id="KW-0699">rRNA-binding</keyword>
<keyword id="KW-0820">tRNA-binding</keyword>
<protein>
    <recommendedName>
        <fullName evidence="1">Large ribosomal subunit protein uL5</fullName>
    </recommendedName>
    <alternativeName>
        <fullName evidence="2">50S ribosomal protein L5</fullName>
    </alternativeName>
</protein>
<evidence type="ECO:0000255" key="1">
    <source>
        <dbReference type="HAMAP-Rule" id="MF_01333"/>
    </source>
</evidence>
<evidence type="ECO:0000305" key="2"/>
<name>RL5_BUCAT</name>
<sequence length="179" mass="20295">MATLYDYYKSKVITQLMHELNYSSVMQVPKIDKITLNMGVGGAASDKKILDNAILDLTAISGQKPLITKARKSVAGFKIRQGYPIGCKVTLRGQKKWHFFERLIIIAVPRIRDFRGLSSHSFDGQGNYSLGIREQIIFPEIDYDKIDRVRGLDITITTTAKSNHEARLLLSAFNFPFRK</sequence>
<feature type="chain" id="PRO_1000166118" description="Large ribosomal subunit protein uL5">
    <location>
        <begin position="1"/>
        <end position="179"/>
    </location>
</feature>
<organism>
    <name type="scientific">Buchnera aphidicola subsp. Acyrthosiphon pisum (strain Tuc7)</name>
    <dbReference type="NCBI Taxonomy" id="561501"/>
    <lineage>
        <taxon>Bacteria</taxon>
        <taxon>Pseudomonadati</taxon>
        <taxon>Pseudomonadota</taxon>
        <taxon>Gammaproteobacteria</taxon>
        <taxon>Enterobacterales</taxon>
        <taxon>Erwiniaceae</taxon>
        <taxon>Buchnera</taxon>
    </lineage>
</organism>
<accession>B8D837</accession>
<proteinExistence type="inferred from homology"/>